<keyword id="KW-0963">Cytoplasm</keyword>
<keyword id="KW-0378">Hydrolase</keyword>
<keyword id="KW-0540">Nuclease</keyword>
<keyword id="KW-1185">Reference proteome</keyword>
<keyword id="KW-0690">Ribosome biogenesis</keyword>
<reference key="1">
    <citation type="journal article" date="2008" name="PLoS Genet.">
        <title>Complete genome sequence of the complex carbohydrate-degrading marine bacterium, Saccharophagus degradans strain 2-40 T.</title>
        <authorList>
            <person name="Weiner R.M."/>
            <person name="Taylor L.E. II"/>
            <person name="Henrissat B."/>
            <person name="Hauser L."/>
            <person name="Land M."/>
            <person name="Coutinho P.M."/>
            <person name="Rancurel C."/>
            <person name="Saunders E.H."/>
            <person name="Longmire A.G."/>
            <person name="Zhang H."/>
            <person name="Bayer E.A."/>
            <person name="Gilbert H.J."/>
            <person name="Larimer F."/>
            <person name="Zhulin I.B."/>
            <person name="Ekborg N.A."/>
            <person name="Lamed R."/>
            <person name="Richardson P.M."/>
            <person name="Borovok I."/>
            <person name="Hutcheson S."/>
        </authorList>
    </citation>
    <scope>NUCLEOTIDE SEQUENCE [LARGE SCALE GENOMIC DNA]</scope>
    <source>
        <strain>2-40 / ATCC 43961 / DSM 17024</strain>
    </source>
</reference>
<dbReference type="EC" id="3.1.-.-" evidence="1"/>
<dbReference type="EMBL" id="CP000282">
    <property type="protein sequence ID" value="ABD82893.1"/>
    <property type="molecule type" value="Genomic_DNA"/>
</dbReference>
<dbReference type="RefSeq" id="WP_011470108.1">
    <property type="nucleotide sequence ID" value="NC_007912.1"/>
</dbReference>
<dbReference type="SMR" id="Q21EI6"/>
<dbReference type="STRING" id="203122.Sde_3638"/>
<dbReference type="GeneID" id="98615247"/>
<dbReference type="KEGG" id="sde:Sde_3638"/>
<dbReference type="eggNOG" id="COG0816">
    <property type="taxonomic scope" value="Bacteria"/>
</dbReference>
<dbReference type="HOGENOM" id="CLU_098240_3_0_6"/>
<dbReference type="OrthoDB" id="9796140at2"/>
<dbReference type="Proteomes" id="UP000001947">
    <property type="component" value="Chromosome"/>
</dbReference>
<dbReference type="GO" id="GO:0005829">
    <property type="term" value="C:cytosol"/>
    <property type="evidence" value="ECO:0007669"/>
    <property type="project" value="TreeGrafter"/>
</dbReference>
<dbReference type="GO" id="GO:0004518">
    <property type="term" value="F:nuclease activity"/>
    <property type="evidence" value="ECO:0007669"/>
    <property type="project" value="UniProtKB-KW"/>
</dbReference>
<dbReference type="GO" id="GO:0000967">
    <property type="term" value="P:rRNA 5'-end processing"/>
    <property type="evidence" value="ECO:0007669"/>
    <property type="project" value="UniProtKB-UniRule"/>
</dbReference>
<dbReference type="CDD" id="cd16964">
    <property type="entry name" value="YqgF"/>
    <property type="match status" value="1"/>
</dbReference>
<dbReference type="Gene3D" id="3.30.420.140">
    <property type="entry name" value="YqgF/RNase H-like domain"/>
    <property type="match status" value="1"/>
</dbReference>
<dbReference type="HAMAP" id="MF_00651">
    <property type="entry name" value="Nuclease_YqgF"/>
    <property type="match status" value="1"/>
</dbReference>
<dbReference type="InterPro" id="IPR012337">
    <property type="entry name" value="RNaseH-like_sf"/>
</dbReference>
<dbReference type="InterPro" id="IPR005227">
    <property type="entry name" value="YqgF"/>
</dbReference>
<dbReference type="InterPro" id="IPR006641">
    <property type="entry name" value="YqgF/RNaseH-like_dom"/>
</dbReference>
<dbReference type="InterPro" id="IPR037027">
    <property type="entry name" value="YqgF/RNaseH-like_dom_sf"/>
</dbReference>
<dbReference type="NCBIfam" id="TIGR00250">
    <property type="entry name" value="RNAse_H_YqgF"/>
    <property type="match status" value="1"/>
</dbReference>
<dbReference type="PANTHER" id="PTHR33317">
    <property type="entry name" value="POLYNUCLEOTIDYL TRANSFERASE, RIBONUCLEASE H-LIKE SUPERFAMILY PROTEIN"/>
    <property type="match status" value="1"/>
</dbReference>
<dbReference type="PANTHER" id="PTHR33317:SF4">
    <property type="entry name" value="POLYNUCLEOTIDYL TRANSFERASE, RIBONUCLEASE H-LIKE SUPERFAMILY PROTEIN"/>
    <property type="match status" value="1"/>
</dbReference>
<dbReference type="Pfam" id="PF03652">
    <property type="entry name" value="RuvX"/>
    <property type="match status" value="1"/>
</dbReference>
<dbReference type="SMART" id="SM00732">
    <property type="entry name" value="YqgFc"/>
    <property type="match status" value="1"/>
</dbReference>
<dbReference type="SUPFAM" id="SSF53098">
    <property type="entry name" value="Ribonuclease H-like"/>
    <property type="match status" value="1"/>
</dbReference>
<proteinExistence type="inferred from homology"/>
<gene>
    <name type="ordered locus">Sde_3638</name>
</gene>
<feature type="chain" id="PRO_0000257585" description="Putative pre-16S rRNA nuclease">
    <location>
        <begin position="1"/>
        <end position="142"/>
    </location>
</feature>
<sequence>MTSQTLLAFDFGTKRIGAAVGQSITCTANILNTIPAKEGIPNWDTIEALLKEWQPDTVIVGLPLNMDGTENELCRRAKKFGNRIHGRFRVPVEMFDERLTTREAKELAWEEGHKGNYANDPVDSIAARLILESWWRQHPPTP</sequence>
<name>YQGF_SACD2</name>
<protein>
    <recommendedName>
        <fullName evidence="1">Putative pre-16S rRNA nuclease</fullName>
        <ecNumber evidence="1">3.1.-.-</ecNumber>
    </recommendedName>
</protein>
<accession>Q21EI6</accession>
<evidence type="ECO:0000255" key="1">
    <source>
        <dbReference type="HAMAP-Rule" id="MF_00651"/>
    </source>
</evidence>
<organism>
    <name type="scientific">Saccharophagus degradans (strain 2-40 / ATCC 43961 / DSM 17024)</name>
    <dbReference type="NCBI Taxonomy" id="203122"/>
    <lineage>
        <taxon>Bacteria</taxon>
        <taxon>Pseudomonadati</taxon>
        <taxon>Pseudomonadota</taxon>
        <taxon>Gammaproteobacteria</taxon>
        <taxon>Cellvibrionales</taxon>
        <taxon>Cellvibrionaceae</taxon>
        <taxon>Saccharophagus</taxon>
    </lineage>
</organism>
<comment type="function">
    <text evidence="1">Could be a nuclease involved in processing of the 5'-end of pre-16S rRNA.</text>
</comment>
<comment type="subcellular location">
    <subcellularLocation>
        <location evidence="1">Cytoplasm</location>
    </subcellularLocation>
</comment>
<comment type="similarity">
    <text evidence="1">Belongs to the YqgF nuclease family.</text>
</comment>